<reference key="1">
    <citation type="journal article" date="2009" name="Science">
        <title>The dynamics and time scale of ongoing genomic erosion in symbiotic bacteria.</title>
        <authorList>
            <person name="Moran N.A."/>
            <person name="McLaughlin H.J."/>
            <person name="Sorek R."/>
        </authorList>
    </citation>
    <scope>NUCLEOTIDE SEQUENCE [LARGE SCALE GENOMIC DNA]</scope>
    <source>
        <strain>Tuc7</strain>
    </source>
</reference>
<feature type="chain" id="PRO_1000194693" description="Ribose-5-phosphate isomerase A">
    <location>
        <begin position="1"/>
        <end position="223"/>
    </location>
</feature>
<feature type="active site" description="Proton acceptor" evidence="1">
    <location>
        <position position="103"/>
    </location>
</feature>
<feature type="binding site" evidence="1">
    <location>
        <begin position="28"/>
        <end position="31"/>
    </location>
    <ligand>
        <name>substrate</name>
    </ligand>
</feature>
<feature type="binding site" evidence="1">
    <location>
        <begin position="81"/>
        <end position="84"/>
    </location>
    <ligand>
        <name>substrate</name>
    </ligand>
</feature>
<feature type="binding site" evidence="1">
    <location>
        <begin position="94"/>
        <end position="97"/>
    </location>
    <ligand>
        <name>substrate</name>
    </ligand>
</feature>
<feature type="binding site" evidence="1">
    <location>
        <position position="121"/>
    </location>
    <ligand>
        <name>substrate</name>
    </ligand>
</feature>
<evidence type="ECO:0000255" key="1">
    <source>
        <dbReference type="HAMAP-Rule" id="MF_00170"/>
    </source>
</evidence>
<keyword id="KW-0413">Isomerase</keyword>
<comment type="function">
    <text evidence="1">Catalyzes the reversible conversion of ribose-5-phosphate to ribulose 5-phosphate.</text>
</comment>
<comment type="catalytic activity">
    <reaction evidence="1">
        <text>aldehydo-D-ribose 5-phosphate = D-ribulose 5-phosphate</text>
        <dbReference type="Rhea" id="RHEA:14657"/>
        <dbReference type="ChEBI" id="CHEBI:58121"/>
        <dbReference type="ChEBI" id="CHEBI:58273"/>
        <dbReference type="EC" id="5.3.1.6"/>
    </reaction>
</comment>
<comment type="pathway">
    <text evidence="1">Carbohydrate degradation; pentose phosphate pathway; D-ribose 5-phosphate from D-ribulose 5-phosphate (non-oxidative stage): step 1/1.</text>
</comment>
<comment type="subunit">
    <text evidence="1">Homodimer.</text>
</comment>
<comment type="similarity">
    <text evidence="1">Belongs to the ribose 5-phosphate isomerase family.</text>
</comment>
<dbReference type="EC" id="5.3.1.6" evidence="1"/>
<dbReference type="EMBL" id="CP001158">
    <property type="protein sequence ID" value="ACL30209.1"/>
    <property type="molecule type" value="Genomic_DNA"/>
</dbReference>
<dbReference type="RefSeq" id="WP_009874367.1">
    <property type="nucleotide sequence ID" value="NC_011834.1"/>
</dbReference>
<dbReference type="SMR" id="B8D7U4"/>
<dbReference type="KEGG" id="bau:BUAPTUC7_405"/>
<dbReference type="HOGENOM" id="CLU_056590_1_1_6"/>
<dbReference type="UniPathway" id="UPA00115">
    <property type="reaction ID" value="UER00412"/>
</dbReference>
<dbReference type="GO" id="GO:0005829">
    <property type="term" value="C:cytosol"/>
    <property type="evidence" value="ECO:0007669"/>
    <property type="project" value="TreeGrafter"/>
</dbReference>
<dbReference type="GO" id="GO:0004751">
    <property type="term" value="F:ribose-5-phosphate isomerase activity"/>
    <property type="evidence" value="ECO:0007669"/>
    <property type="project" value="UniProtKB-UniRule"/>
</dbReference>
<dbReference type="GO" id="GO:0006014">
    <property type="term" value="P:D-ribose metabolic process"/>
    <property type="evidence" value="ECO:0007669"/>
    <property type="project" value="TreeGrafter"/>
</dbReference>
<dbReference type="GO" id="GO:0009052">
    <property type="term" value="P:pentose-phosphate shunt, non-oxidative branch"/>
    <property type="evidence" value="ECO:0007669"/>
    <property type="project" value="UniProtKB-UniRule"/>
</dbReference>
<dbReference type="CDD" id="cd01398">
    <property type="entry name" value="RPI_A"/>
    <property type="match status" value="1"/>
</dbReference>
<dbReference type="FunFam" id="3.30.70.260:FF:000004">
    <property type="entry name" value="Ribose-5-phosphate isomerase A"/>
    <property type="match status" value="1"/>
</dbReference>
<dbReference type="FunFam" id="3.40.50.1360:FF:000001">
    <property type="entry name" value="Ribose-5-phosphate isomerase A"/>
    <property type="match status" value="1"/>
</dbReference>
<dbReference type="Gene3D" id="3.30.70.260">
    <property type="match status" value="1"/>
</dbReference>
<dbReference type="Gene3D" id="3.40.50.1360">
    <property type="match status" value="1"/>
</dbReference>
<dbReference type="HAMAP" id="MF_00170">
    <property type="entry name" value="Rib_5P_isom_A"/>
    <property type="match status" value="1"/>
</dbReference>
<dbReference type="InterPro" id="IPR037171">
    <property type="entry name" value="NagB/RpiA_transferase-like"/>
</dbReference>
<dbReference type="InterPro" id="IPR020672">
    <property type="entry name" value="Ribose5P_isomerase_typA_subgr"/>
</dbReference>
<dbReference type="InterPro" id="IPR004788">
    <property type="entry name" value="Ribose5P_isomerase_type_A"/>
</dbReference>
<dbReference type="NCBIfam" id="NF001924">
    <property type="entry name" value="PRK00702.1"/>
    <property type="match status" value="1"/>
</dbReference>
<dbReference type="NCBIfam" id="TIGR00021">
    <property type="entry name" value="rpiA"/>
    <property type="match status" value="1"/>
</dbReference>
<dbReference type="PANTHER" id="PTHR11934">
    <property type="entry name" value="RIBOSE-5-PHOSPHATE ISOMERASE"/>
    <property type="match status" value="1"/>
</dbReference>
<dbReference type="PANTHER" id="PTHR11934:SF0">
    <property type="entry name" value="RIBOSE-5-PHOSPHATE ISOMERASE"/>
    <property type="match status" value="1"/>
</dbReference>
<dbReference type="Pfam" id="PF06026">
    <property type="entry name" value="Rib_5-P_isom_A"/>
    <property type="match status" value="1"/>
</dbReference>
<dbReference type="SUPFAM" id="SSF75445">
    <property type="entry name" value="D-ribose-5-phosphate isomerase (RpiA), lid domain"/>
    <property type="match status" value="1"/>
</dbReference>
<dbReference type="SUPFAM" id="SSF100950">
    <property type="entry name" value="NagB/RpiA/CoA transferase-like"/>
    <property type="match status" value="1"/>
</dbReference>
<sequence>MNLNKLKKKAAWAALDYIDPGTIIGVGTGTTIFYFIEALGTIKNLIYGAVSSSNSSTVLLKKHGIEVFDLKNFSSLAIYVDSADEINNHMQMIKGGGGALTREKIIASMSKKFVCIIDKSKKVDVLGTFPLPIEIIPMALSYIFREMIKIGGTPKYRKNVITDNGNIIIDVYNLCIKDPISMEKKINSLPGVVTVGLFASRSADIVLIGTQKGIRTINKKENR</sequence>
<protein>
    <recommendedName>
        <fullName evidence="1">Ribose-5-phosphate isomerase A</fullName>
        <ecNumber evidence="1">5.3.1.6</ecNumber>
    </recommendedName>
    <alternativeName>
        <fullName evidence="1">Phosphoriboisomerase A</fullName>
        <shortName evidence="1">PRI</shortName>
    </alternativeName>
</protein>
<name>RPIA_BUCAT</name>
<organism>
    <name type="scientific">Buchnera aphidicola subsp. Acyrthosiphon pisum (strain Tuc7)</name>
    <dbReference type="NCBI Taxonomy" id="561501"/>
    <lineage>
        <taxon>Bacteria</taxon>
        <taxon>Pseudomonadati</taxon>
        <taxon>Pseudomonadota</taxon>
        <taxon>Gammaproteobacteria</taxon>
        <taxon>Enterobacterales</taxon>
        <taxon>Erwiniaceae</taxon>
        <taxon>Buchnera</taxon>
    </lineage>
</organism>
<gene>
    <name evidence="1" type="primary">rpiA</name>
    <name type="ordered locus">BUAPTUC7_405</name>
</gene>
<proteinExistence type="inferred from homology"/>
<accession>B8D7U4</accession>